<dbReference type="EC" id="2.5.1.7" evidence="1"/>
<dbReference type="EMBL" id="CP000304">
    <property type="protein sequence ID" value="ABP78741.1"/>
    <property type="molecule type" value="Genomic_DNA"/>
</dbReference>
<dbReference type="RefSeq" id="WP_011912232.1">
    <property type="nucleotide sequence ID" value="NC_009434.1"/>
</dbReference>
<dbReference type="SMR" id="A4VIE0"/>
<dbReference type="KEGG" id="psa:PST_1044"/>
<dbReference type="eggNOG" id="COG0766">
    <property type="taxonomic scope" value="Bacteria"/>
</dbReference>
<dbReference type="HOGENOM" id="CLU_027387_0_0_6"/>
<dbReference type="UniPathway" id="UPA00219"/>
<dbReference type="Proteomes" id="UP000000233">
    <property type="component" value="Chromosome"/>
</dbReference>
<dbReference type="GO" id="GO:0005737">
    <property type="term" value="C:cytoplasm"/>
    <property type="evidence" value="ECO:0007669"/>
    <property type="project" value="UniProtKB-SubCell"/>
</dbReference>
<dbReference type="GO" id="GO:0008760">
    <property type="term" value="F:UDP-N-acetylglucosamine 1-carboxyvinyltransferase activity"/>
    <property type="evidence" value="ECO:0007669"/>
    <property type="project" value="UniProtKB-UniRule"/>
</dbReference>
<dbReference type="GO" id="GO:0051301">
    <property type="term" value="P:cell division"/>
    <property type="evidence" value="ECO:0007669"/>
    <property type="project" value="UniProtKB-KW"/>
</dbReference>
<dbReference type="GO" id="GO:0071555">
    <property type="term" value="P:cell wall organization"/>
    <property type="evidence" value="ECO:0007669"/>
    <property type="project" value="UniProtKB-KW"/>
</dbReference>
<dbReference type="GO" id="GO:0009252">
    <property type="term" value="P:peptidoglycan biosynthetic process"/>
    <property type="evidence" value="ECO:0007669"/>
    <property type="project" value="UniProtKB-UniRule"/>
</dbReference>
<dbReference type="GO" id="GO:0008360">
    <property type="term" value="P:regulation of cell shape"/>
    <property type="evidence" value="ECO:0007669"/>
    <property type="project" value="UniProtKB-KW"/>
</dbReference>
<dbReference type="GO" id="GO:0019277">
    <property type="term" value="P:UDP-N-acetylgalactosamine biosynthetic process"/>
    <property type="evidence" value="ECO:0007669"/>
    <property type="project" value="InterPro"/>
</dbReference>
<dbReference type="CDD" id="cd01555">
    <property type="entry name" value="UdpNAET"/>
    <property type="match status" value="1"/>
</dbReference>
<dbReference type="FunFam" id="3.65.10.10:FF:000002">
    <property type="entry name" value="UDP-N-acetylglucosamine 1-carboxyvinyltransferase"/>
    <property type="match status" value="1"/>
</dbReference>
<dbReference type="Gene3D" id="3.65.10.10">
    <property type="entry name" value="Enolpyruvate transferase domain"/>
    <property type="match status" value="2"/>
</dbReference>
<dbReference type="HAMAP" id="MF_00111">
    <property type="entry name" value="MurA"/>
    <property type="match status" value="1"/>
</dbReference>
<dbReference type="InterPro" id="IPR001986">
    <property type="entry name" value="Enolpyruvate_Tfrase_dom"/>
</dbReference>
<dbReference type="InterPro" id="IPR036968">
    <property type="entry name" value="Enolpyruvate_Tfrase_sf"/>
</dbReference>
<dbReference type="InterPro" id="IPR050068">
    <property type="entry name" value="MurA_subfamily"/>
</dbReference>
<dbReference type="InterPro" id="IPR013792">
    <property type="entry name" value="RNA3'P_cycl/enolpyr_Trfase_a/b"/>
</dbReference>
<dbReference type="InterPro" id="IPR005750">
    <property type="entry name" value="UDP_GlcNAc_COvinyl_MurA"/>
</dbReference>
<dbReference type="NCBIfam" id="TIGR01072">
    <property type="entry name" value="murA"/>
    <property type="match status" value="1"/>
</dbReference>
<dbReference type="NCBIfam" id="NF006873">
    <property type="entry name" value="PRK09369.1"/>
    <property type="match status" value="1"/>
</dbReference>
<dbReference type="PANTHER" id="PTHR43783">
    <property type="entry name" value="UDP-N-ACETYLGLUCOSAMINE 1-CARBOXYVINYLTRANSFERASE"/>
    <property type="match status" value="1"/>
</dbReference>
<dbReference type="PANTHER" id="PTHR43783:SF1">
    <property type="entry name" value="UDP-N-ACETYLGLUCOSAMINE 1-CARBOXYVINYLTRANSFERASE"/>
    <property type="match status" value="1"/>
</dbReference>
<dbReference type="Pfam" id="PF00275">
    <property type="entry name" value="EPSP_synthase"/>
    <property type="match status" value="1"/>
</dbReference>
<dbReference type="SUPFAM" id="SSF55205">
    <property type="entry name" value="EPT/RTPC-like"/>
    <property type="match status" value="1"/>
</dbReference>
<keyword id="KW-0131">Cell cycle</keyword>
<keyword id="KW-0132">Cell division</keyword>
<keyword id="KW-0133">Cell shape</keyword>
<keyword id="KW-0961">Cell wall biogenesis/degradation</keyword>
<keyword id="KW-0963">Cytoplasm</keyword>
<keyword id="KW-0573">Peptidoglycan synthesis</keyword>
<keyword id="KW-0670">Pyruvate</keyword>
<keyword id="KW-1185">Reference proteome</keyword>
<keyword id="KW-0808">Transferase</keyword>
<comment type="function">
    <text evidence="1">Cell wall formation. Adds enolpyruvyl to UDP-N-acetylglucosamine.</text>
</comment>
<comment type="catalytic activity">
    <reaction evidence="1">
        <text>phosphoenolpyruvate + UDP-N-acetyl-alpha-D-glucosamine = UDP-N-acetyl-3-O-(1-carboxyvinyl)-alpha-D-glucosamine + phosphate</text>
        <dbReference type="Rhea" id="RHEA:18681"/>
        <dbReference type="ChEBI" id="CHEBI:43474"/>
        <dbReference type="ChEBI" id="CHEBI:57705"/>
        <dbReference type="ChEBI" id="CHEBI:58702"/>
        <dbReference type="ChEBI" id="CHEBI:68483"/>
        <dbReference type="EC" id="2.5.1.7"/>
    </reaction>
</comment>
<comment type="pathway">
    <text evidence="1">Cell wall biogenesis; peptidoglycan biosynthesis.</text>
</comment>
<comment type="subcellular location">
    <subcellularLocation>
        <location evidence="1">Cytoplasm</location>
    </subcellularLocation>
</comment>
<comment type="similarity">
    <text evidence="1">Belongs to the EPSP synthase family. MurA subfamily.</text>
</comment>
<reference key="1">
    <citation type="journal article" date="2008" name="Proc. Natl. Acad. Sci. U.S.A.">
        <title>Nitrogen fixation island and rhizosphere competence traits in the genome of root-associated Pseudomonas stutzeri A1501.</title>
        <authorList>
            <person name="Yan Y."/>
            <person name="Yang J."/>
            <person name="Dou Y."/>
            <person name="Chen M."/>
            <person name="Ping S."/>
            <person name="Peng J."/>
            <person name="Lu W."/>
            <person name="Zhang W."/>
            <person name="Yao Z."/>
            <person name="Li H."/>
            <person name="Liu W."/>
            <person name="He S."/>
            <person name="Geng L."/>
            <person name="Zhang X."/>
            <person name="Yang F."/>
            <person name="Yu H."/>
            <person name="Zhan Y."/>
            <person name="Li D."/>
            <person name="Lin Z."/>
            <person name="Wang Y."/>
            <person name="Elmerich C."/>
            <person name="Lin M."/>
            <person name="Jin Q."/>
        </authorList>
    </citation>
    <scope>NUCLEOTIDE SEQUENCE [LARGE SCALE GENOMIC DNA]</scope>
    <source>
        <strain>A1501</strain>
    </source>
</reference>
<name>MURA_STUS1</name>
<organism>
    <name type="scientific">Stutzerimonas stutzeri (strain A1501)</name>
    <name type="common">Pseudomonas stutzeri</name>
    <dbReference type="NCBI Taxonomy" id="379731"/>
    <lineage>
        <taxon>Bacteria</taxon>
        <taxon>Pseudomonadati</taxon>
        <taxon>Pseudomonadota</taxon>
        <taxon>Gammaproteobacteria</taxon>
        <taxon>Pseudomonadales</taxon>
        <taxon>Pseudomonadaceae</taxon>
        <taxon>Stutzerimonas</taxon>
    </lineage>
</organism>
<accession>A4VIE0</accession>
<proteinExistence type="inferred from homology"/>
<protein>
    <recommendedName>
        <fullName evidence="1">UDP-N-acetylglucosamine 1-carboxyvinyltransferase</fullName>
        <ecNumber evidence="1">2.5.1.7</ecNumber>
    </recommendedName>
    <alternativeName>
        <fullName evidence="1">Enoylpyruvate transferase</fullName>
    </alternativeName>
    <alternativeName>
        <fullName evidence="1">UDP-N-acetylglucosamine enolpyruvyl transferase</fullName>
        <shortName evidence="1">EPT</shortName>
    </alternativeName>
</protein>
<sequence>MDKLIITGGIRLDGEIRISGAKNSALPILAATLLADTPVTVCNLPHLHDITTMIELFGRMGVQPIIDEKLSVEVDASSIKTLVAPYELVKTMRASILVLGPMVARFGEAEVALPGGCAIGSRPVDLHIRGLEAMGAKIDVEGGYIKAKAPAGGLRGAHFFFDTVSVTGTENIMMAAALANGRSVLENAAREPEVVDLANFLNAMGAKVSGAGTDTIVIDGVKRLGGGRYSVMPDRIETGTYLVAAAATGGRVRLKDTDATLLEAVLHKLVEAGAHIDTGSDWIELDMKGKRPKAVNVRTAPYPAFPTDMQAQFIALNAIAEGTGTVIETVFENRFMHVYEMNRMGAQILVEGNTAIVTGVDHLKGAPVMATDLRASASLVIAGLVAEGDTLIDRIYHIDRGYECIEEKLQLLGAKIRRVPG</sequence>
<gene>
    <name evidence="1" type="primary">murA</name>
    <name type="ordered locus">PST_1044</name>
</gene>
<feature type="chain" id="PRO_1000023076" description="UDP-N-acetylglucosamine 1-carboxyvinyltransferase">
    <location>
        <begin position="1"/>
        <end position="421"/>
    </location>
</feature>
<feature type="active site" description="Proton donor" evidence="1">
    <location>
        <position position="117"/>
    </location>
</feature>
<feature type="binding site" evidence="1">
    <location>
        <begin position="22"/>
        <end position="23"/>
    </location>
    <ligand>
        <name>phosphoenolpyruvate</name>
        <dbReference type="ChEBI" id="CHEBI:58702"/>
    </ligand>
</feature>
<feature type="binding site" evidence="1">
    <location>
        <position position="93"/>
    </location>
    <ligand>
        <name>UDP-N-acetyl-alpha-D-glucosamine</name>
        <dbReference type="ChEBI" id="CHEBI:57705"/>
    </ligand>
</feature>
<feature type="binding site" evidence="1">
    <location>
        <begin position="122"/>
        <end position="126"/>
    </location>
    <ligand>
        <name>UDP-N-acetyl-alpha-D-glucosamine</name>
        <dbReference type="ChEBI" id="CHEBI:57705"/>
    </ligand>
</feature>
<feature type="binding site" evidence="1">
    <location>
        <position position="308"/>
    </location>
    <ligand>
        <name>UDP-N-acetyl-alpha-D-glucosamine</name>
        <dbReference type="ChEBI" id="CHEBI:57705"/>
    </ligand>
</feature>
<feature type="binding site" evidence="1">
    <location>
        <position position="330"/>
    </location>
    <ligand>
        <name>UDP-N-acetyl-alpha-D-glucosamine</name>
        <dbReference type="ChEBI" id="CHEBI:57705"/>
    </ligand>
</feature>
<feature type="modified residue" description="2-(S-cysteinyl)pyruvic acid O-phosphothioketal" evidence="1">
    <location>
        <position position="117"/>
    </location>
</feature>
<evidence type="ECO:0000255" key="1">
    <source>
        <dbReference type="HAMAP-Rule" id="MF_00111"/>
    </source>
</evidence>